<keyword id="KW-1064">Adaptive immunity</keyword>
<keyword id="KW-0094">Blood coagulation</keyword>
<keyword id="KW-0175">Coiled coil</keyword>
<keyword id="KW-0903">Direct protein sequencing</keyword>
<keyword id="KW-1015">Disulfide bond</keyword>
<keyword id="KW-0356">Hemostasis</keyword>
<keyword id="KW-0391">Immunity</keyword>
<keyword id="KW-0399">Innate immunity</keyword>
<keyword id="KW-1185">Reference proteome</keyword>
<keyword id="KW-0964">Secreted</keyword>
<protein>
    <recommendedName>
        <fullName>Fibrinogen alpha chain</fullName>
    </recommendedName>
    <component>
        <recommendedName>
            <fullName>Fibrinopeptide A</fullName>
        </recommendedName>
    </component>
</protein>
<gene>
    <name type="primary">FGA</name>
</gene>
<sequence>ADDSDPVGGEFLAEGGGVR</sequence>
<comment type="function">
    <text evidence="1">Cleaved by the protease thrombin to yield monomers which, together with fibrinogen beta (FGB) and fibrinogen gamma (FGG), polymerize to form an insoluble fibrin matrix. Fibrin has a major function in hemostasis as one of the primary components of blood clots. In addition, functions during the early stages of wound repair to stabilize the lesion and guide cell migration during re-epithelialization. Was originally thought to be essential for platelet aggregation, based on in vitro studies using anticoagulated blood. However, subsequent studies have shown that it is not absolutely required for thrombus formation in vivo. Enhances expression of SELP in activated platelets via an ITGB3-dependent pathway. Maternal fibrinogen is essential for successful pregnancy. Fibrin deposition is also associated with infection, where it protects against IFNG-mediated hemorrhage. May also facilitate the immune response via both innate and T-cell mediated pathways.</text>
</comment>
<comment type="subunit">
    <text evidence="2">Heterohexamer; disulfide linked. Contains 2 sets of 3 non-identical chains (alpha, beta and gamma). The 2 heterotrimers are in head to head conformation with the N-termini in a small central domain (By similarity).</text>
</comment>
<comment type="subcellular location">
    <subcellularLocation>
        <location>Secreted</location>
    </subcellularLocation>
</comment>
<comment type="domain">
    <text evidence="2">A long coiled coil structure formed by 3 polypeptide chains connects the central nodule to the C-terminal domains (distal nodules). The long C-terminal ends of the alpha chains fold back, contributing a fourth strand to the coiled coil structure.</text>
</comment>
<comment type="PTM">
    <text>Conversion of fibrinogen to fibrin is triggered by thrombin, which cleaves fibrinopeptides A and B from alpha and beta chains, and thus exposes the N-terminal polymerization sites responsible for the formation of the soft clot. The soft clot is converted into the hard clot by factor XIIIA which catalyzes the epsilon-(gamma-glutamyl)lysine cross-linking between gamma chains (stronger) and between alpha chains (weaker) of different monomers.</text>
</comment>
<comment type="PTM">
    <text>Forms F13A-mediated cross-links between a glutamine and the epsilon-amino group of a lysine residue, forming fibronectin-fibrinogen heteropolymers.</text>
</comment>
<evidence type="ECO:0000250" key="1">
    <source>
        <dbReference type="UniProtKB" id="E9PV24"/>
    </source>
</evidence>
<evidence type="ECO:0000250" key="2">
    <source>
        <dbReference type="UniProtKB" id="P02671"/>
    </source>
</evidence>
<name>FIBA_SHEEP</name>
<reference key="1">
    <citation type="journal article" date="1965" name="Acta Chem. Scand.">
        <title>Studies on fibrinopeptides from mammals.</title>
        <authorList>
            <person name="Blombaeck B."/>
            <person name="Blombaeck M."/>
            <person name="Grondahl N.J."/>
        </authorList>
    </citation>
    <scope>PROTEIN SEQUENCE</scope>
</reference>
<organism>
    <name type="scientific">Ovis aries</name>
    <name type="common">Sheep</name>
    <dbReference type="NCBI Taxonomy" id="9940"/>
    <lineage>
        <taxon>Eukaryota</taxon>
        <taxon>Metazoa</taxon>
        <taxon>Chordata</taxon>
        <taxon>Craniata</taxon>
        <taxon>Vertebrata</taxon>
        <taxon>Euteleostomi</taxon>
        <taxon>Mammalia</taxon>
        <taxon>Eutheria</taxon>
        <taxon>Laurasiatheria</taxon>
        <taxon>Artiodactyla</taxon>
        <taxon>Ruminantia</taxon>
        <taxon>Pecora</taxon>
        <taxon>Bovidae</taxon>
        <taxon>Caprinae</taxon>
        <taxon>Ovis</taxon>
    </lineage>
</organism>
<feature type="peptide" id="PRO_0000009040" description="Fibrinopeptide A">
    <location>
        <begin position="1"/>
        <end position="19"/>
    </location>
</feature>
<feature type="non-terminal residue">
    <location>
        <position position="19"/>
    </location>
</feature>
<dbReference type="STRING" id="9940.ENSOARP00000017968"/>
<dbReference type="PaxDb" id="9940-ENSOARP00000017968"/>
<dbReference type="eggNOG" id="KOG2579">
    <property type="taxonomic scope" value="Eukaryota"/>
</dbReference>
<dbReference type="Proteomes" id="UP000002356">
    <property type="component" value="Unplaced"/>
</dbReference>
<dbReference type="GO" id="GO:0005576">
    <property type="term" value="C:extracellular region"/>
    <property type="evidence" value="ECO:0007669"/>
    <property type="project" value="UniProtKB-SubCell"/>
</dbReference>
<dbReference type="GO" id="GO:0002250">
    <property type="term" value="P:adaptive immune response"/>
    <property type="evidence" value="ECO:0007669"/>
    <property type="project" value="UniProtKB-KW"/>
</dbReference>
<dbReference type="GO" id="GO:0007596">
    <property type="term" value="P:blood coagulation"/>
    <property type="evidence" value="ECO:0007669"/>
    <property type="project" value="UniProtKB-KW"/>
</dbReference>
<dbReference type="GO" id="GO:0045087">
    <property type="term" value="P:innate immune response"/>
    <property type="evidence" value="ECO:0007669"/>
    <property type="project" value="UniProtKB-KW"/>
</dbReference>
<proteinExistence type="evidence at protein level"/>
<accession>P68214</accession>
<accession>P14451</accession>